<dbReference type="EC" id="6.3.4.-" evidence="1 2"/>
<dbReference type="EMBL" id="Z98682">
    <property type="protein sequence ID" value="CAB11359.1"/>
    <property type="molecule type" value="Genomic_DNA"/>
</dbReference>
<dbReference type="EMBL" id="AL009126">
    <property type="protein sequence ID" value="CAB13379.1"/>
    <property type="molecule type" value="Genomic_DNA"/>
</dbReference>
<dbReference type="PIR" id="B69875">
    <property type="entry name" value="B69875"/>
</dbReference>
<dbReference type="RefSeq" id="NP_389389.1">
    <property type="nucleotide sequence ID" value="NC_000964.3"/>
</dbReference>
<dbReference type="RefSeq" id="WP_003244707.1">
    <property type="nucleotide sequence ID" value="NZ_OZ025638.1"/>
</dbReference>
<dbReference type="PDB" id="5Y0N">
    <property type="method" value="X-ray"/>
    <property type="resolution" value="2.30 A"/>
    <property type="chains" value="A/B=1-415"/>
</dbReference>
<dbReference type="PDB" id="5Y0O">
    <property type="method" value="X-ray"/>
    <property type="resolution" value="2.30 A"/>
    <property type="chains" value="A/B=1-415"/>
</dbReference>
<dbReference type="PDB" id="5Y0P">
    <property type="method" value="X-ray"/>
    <property type="resolution" value="2.30 A"/>
    <property type="chains" value="A/B=1-415"/>
</dbReference>
<dbReference type="PDB" id="5Y0Q">
    <property type="method" value="X-ray"/>
    <property type="resolution" value="2.10 A"/>
    <property type="chains" value="A/B=1-415"/>
</dbReference>
<dbReference type="PDBsum" id="5Y0N"/>
<dbReference type="PDBsum" id="5Y0O"/>
<dbReference type="PDBsum" id="5Y0P"/>
<dbReference type="PDBsum" id="5Y0Q"/>
<dbReference type="SMR" id="O34513"/>
<dbReference type="FunCoup" id="O34513">
    <property type="interactions" value="70"/>
</dbReference>
<dbReference type="STRING" id="224308.BSU15060"/>
<dbReference type="PaxDb" id="224308-BSU15060"/>
<dbReference type="EnsemblBacteria" id="CAB13379">
    <property type="protein sequence ID" value="CAB13379"/>
    <property type="gene ID" value="BSU_15060"/>
</dbReference>
<dbReference type="GeneID" id="936548"/>
<dbReference type="KEGG" id="bsu:BSU15060"/>
<dbReference type="PATRIC" id="fig|224308.179.peg.1641"/>
<dbReference type="eggNOG" id="COG1323">
    <property type="taxonomic scope" value="Bacteria"/>
</dbReference>
<dbReference type="InParanoid" id="O34513"/>
<dbReference type="OrthoDB" id="9769796at2"/>
<dbReference type="PhylomeDB" id="O34513"/>
<dbReference type="BioCyc" id="BSUB:BSU15060-MONOMER"/>
<dbReference type="Proteomes" id="UP000001570">
    <property type="component" value="Chromosome"/>
</dbReference>
<dbReference type="GO" id="GO:0005737">
    <property type="term" value="C:cytoplasm"/>
    <property type="evidence" value="ECO:0007669"/>
    <property type="project" value="UniProtKB-SubCell"/>
</dbReference>
<dbReference type="GO" id="GO:0005524">
    <property type="term" value="F:ATP binding"/>
    <property type="evidence" value="ECO:0007669"/>
    <property type="project" value="UniProtKB-KW"/>
</dbReference>
<dbReference type="GO" id="GO:0016879">
    <property type="term" value="F:ligase activity, forming carbon-nitrogen bonds"/>
    <property type="evidence" value="ECO:0007669"/>
    <property type="project" value="UniProtKB-UniRule"/>
</dbReference>
<dbReference type="GO" id="GO:0000049">
    <property type="term" value="F:tRNA binding"/>
    <property type="evidence" value="ECO:0007669"/>
    <property type="project" value="UniProtKB-KW"/>
</dbReference>
<dbReference type="GO" id="GO:0006400">
    <property type="term" value="P:tRNA modification"/>
    <property type="evidence" value="ECO:0007669"/>
    <property type="project" value="UniProtKB-UniRule"/>
</dbReference>
<dbReference type="Gene3D" id="3.40.50.620">
    <property type="entry name" value="HUPs"/>
    <property type="match status" value="1"/>
</dbReference>
<dbReference type="HAMAP" id="MF_01539">
    <property type="entry name" value="TmcAL"/>
    <property type="match status" value="1"/>
</dbReference>
<dbReference type="InterPro" id="IPR014729">
    <property type="entry name" value="Rossmann-like_a/b/a_fold"/>
</dbReference>
<dbReference type="InterPro" id="IPR008513">
    <property type="entry name" value="tRNA(Met)_cyd_acetate_ligase"/>
</dbReference>
<dbReference type="NCBIfam" id="NF010191">
    <property type="entry name" value="PRK13670.1"/>
    <property type="match status" value="1"/>
</dbReference>
<dbReference type="PANTHER" id="PTHR37825">
    <property type="entry name" value="TRNA(MET) CYTIDINE ACETATE LIGASE"/>
    <property type="match status" value="1"/>
</dbReference>
<dbReference type="PANTHER" id="PTHR37825:SF1">
    <property type="entry name" value="TRNA(MET) CYTIDINE ACETATE LIGASE"/>
    <property type="match status" value="1"/>
</dbReference>
<dbReference type="Pfam" id="PF05636">
    <property type="entry name" value="HIGH_NTase1"/>
    <property type="match status" value="1"/>
</dbReference>
<dbReference type="SUPFAM" id="SSF52374">
    <property type="entry name" value="Nucleotidylyl transferase"/>
    <property type="match status" value="1"/>
</dbReference>
<gene>
    <name evidence="1 3" type="primary">tmcAL</name>
    <name type="synonym">ylbM</name>
    <name type="ordered locus">BSU15060</name>
</gene>
<protein>
    <recommendedName>
        <fullName evidence="1 3">tRNA(Met) cytidine acetate ligase</fullName>
        <ecNumber evidence="1 2">6.3.4.-</ecNumber>
    </recommendedName>
</protein>
<sequence>MKAVGLVVEYNPFHNGHLYHAQTAKLQTGCDTAVAVMSGHFLQRGEPAVVSKWARTKMALQSGVDLVIELPYLYAVQKADIFARGSVSILNELECEALFFGSENGDIKPFLETAQLIDEHKHILNDRIKEELKKGASYPAAAAIAFSSILHTESALDLSKPNNILGYQYVTSILTGGYPMKPYTTARISSDYHDADLPEGENHIASATSIRKAMIGQNLEACLRFLPAASARELAAYRKSFGLWHTPESYFSYLKYSLSTVTARELQQVYEVEEGLEHRIIRSIRKSSSYQEFMELLKTKRYTWTRLQRMNTHILTRTKKQDMQKLLDNDKAPYIRLLGMTKKGQAYLSEKKKALSVPLVSKLSSFSHPALDLDVKASRIYSLPIEEPLRTEFDLQEYGHAPIRYDEDEQHFLNV</sequence>
<organism>
    <name type="scientific">Bacillus subtilis (strain 168)</name>
    <dbReference type="NCBI Taxonomy" id="224308"/>
    <lineage>
        <taxon>Bacteria</taxon>
        <taxon>Bacillati</taxon>
        <taxon>Bacillota</taxon>
        <taxon>Bacilli</taxon>
        <taxon>Bacillales</taxon>
        <taxon>Bacillaceae</taxon>
        <taxon>Bacillus</taxon>
    </lineage>
</organism>
<accession>O34513</accession>
<accession>Q797S9</accession>
<reference key="1">
    <citation type="submission" date="1997-08" db="EMBL/GenBank/DDBJ databases">
        <title>Bacillus subtilis chromosomal region downstream nprE.</title>
        <authorList>
            <person name="Bertero M."/>
            <person name="Presecan E."/>
            <person name="Glaser P."/>
            <person name="Richou A."/>
            <person name="Danchin A."/>
        </authorList>
    </citation>
    <scope>NUCLEOTIDE SEQUENCE [GENOMIC DNA]</scope>
    <source>
        <strain>168</strain>
    </source>
</reference>
<reference key="2">
    <citation type="journal article" date="1997" name="Nature">
        <title>The complete genome sequence of the Gram-positive bacterium Bacillus subtilis.</title>
        <authorList>
            <person name="Kunst F."/>
            <person name="Ogasawara N."/>
            <person name="Moszer I."/>
            <person name="Albertini A.M."/>
            <person name="Alloni G."/>
            <person name="Azevedo V."/>
            <person name="Bertero M.G."/>
            <person name="Bessieres P."/>
            <person name="Bolotin A."/>
            <person name="Borchert S."/>
            <person name="Borriss R."/>
            <person name="Boursier L."/>
            <person name="Brans A."/>
            <person name="Braun M."/>
            <person name="Brignell S.C."/>
            <person name="Bron S."/>
            <person name="Brouillet S."/>
            <person name="Bruschi C.V."/>
            <person name="Caldwell B."/>
            <person name="Capuano V."/>
            <person name="Carter N.M."/>
            <person name="Choi S.-K."/>
            <person name="Codani J.-J."/>
            <person name="Connerton I.F."/>
            <person name="Cummings N.J."/>
            <person name="Daniel R.A."/>
            <person name="Denizot F."/>
            <person name="Devine K.M."/>
            <person name="Duesterhoeft A."/>
            <person name="Ehrlich S.D."/>
            <person name="Emmerson P.T."/>
            <person name="Entian K.-D."/>
            <person name="Errington J."/>
            <person name="Fabret C."/>
            <person name="Ferrari E."/>
            <person name="Foulger D."/>
            <person name="Fritz C."/>
            <person name="Fujita M."/>
            <person name="Fujita Y."/>
            <person name="Fuma S."/>
            <person name="Galizzi A."/>
            <person name="Galleron N."/>
            <person name="Ghim S.-Y."/>
            <person name="Glaser P."/>
            <person name="Goffeau A."/>
            <person name="Golightly E.J."/>
            <person name="Grandi G."/>
            <person name="Guiseppi G."/>
            <person name="Guy B.J."/>
            <person name="Haga K."/>
            <person name="Haiech J."/>
            <person name="Harwood C.R."/>
            <person name="Henaut A."/>
            <person name="Hilbert H."/>
            <person name="Holsappel S."/>
            <person name="Hosono S."/>
            <person name="Hullo M.-F."/>
            <person name="Itaya M."/>
            <person name="Jones L.-M."/>
            <person name="Joris B."/>
            <person name="Karamata D."/>
            <person name="Kasahara Y."/>
            <person name="Klaerr-Blanchard M."/>
            <person name="Klein C."/>
            <person name="Kobayashi Y."/>
            <person name="Koetter P."/>
            <person name="Koningstein G."/>
            <person name="Krogh S."/>
            <person name="Kumano M."/>
            <person name="Kurita K."/>
            <person name="Lapidus A."/>
            <person name="Lardinois S."/>
            <person name="Lauber J."/>
            <person name="Lazarevic V."/>
            <person name="Lee S.-M."/>
            <person name="Levine A."/>
            <person name="Liu H."/>
            <person name="Masuda S."/>
            <person name="Mauel C."/>
            <person name="Medigue C."/>
            <person name="Medina N."/>
            <person name="Mellado R.P."/>
            <person name="Mizuno M."/>
            <person name="Moestl D."/>
            <person name="Nakai S."/>
            <person name="Noback M."/>
            <person name="Noone D."/>
            <person name="O'Reilly M."/>
            <person name="Ogawa K."/>
            <person name="Ogiwara A."/>
            <person name="Oudega B."/>
            <person name="Park S.-H."/>
            <person name="Parro V."/>
            <person name="Pohl T.M."/>
            <person name="Portetelle D."/>
            <person name="Porwollik S."/>
            <person name="Prescott A.M."/>
            <person name="Presecan E."/>
            <person name="Pujic P."/>
            <person name="Purnelle B."/>
            <person name="Rapoport G."/>
            <person name="Rey M."/>
            <person name="Reynolds S."/>
            <person name="Rieger M."/>
            <person name="Rivolta C."/>
            <person name="Rocha E."/>
            <person name="Roche B."/>
            <person name="Rose M."/>
            <person name="Sadaie Y."/>
            <person name="Sato T."/>
            <person name="Scanlan E."/>
            <person name="Schleich S."/>
            <person name="Schroeter R."/>
            <person name="Scoffone F."/>
            <person name="Sekiguchi J."/>
            <person name="Sekowska A."/>
            <person name="Seror S.J."/>
            <person name="Serror P."/>
            <person name="Shin B.-S."/>
            <person name="Soldo B."/>
            <person name="Sorokin A."/>
            <person name="Tacconi E."/>
            <person name="Takagi T."/>
            <person name="Takahashi H."/>
            <person name="Takemaru K."/>
            <person name="Takeuchi M."/>
            <person name="Tamakoshi A."/>
            <person name="Tanaka T."/>
            <person name="Terpstra P."/>
            <person name="Tognoni A."/>
            <person name="Tosato V."/>
            <person name="Uchiyama S."/>
            <person name="Vandenbol M."/>
            <person name="Vannier F."/>
            <person name="Vassarotti A."/>
            <person name="Viari A."/>
            <person name="Wambutt R."/>
            <person name="Wedler E."/>
            <person name="Wedler H."/>
            <person name="Weitzenegger T."/>
            <person name="Winters P."/>
            <person name="Wipat A."/>
            <person name="Yamamoto H."/>
            <person name="Yamane K."/>
            <person name="Yasumoto K."/>
            <person name="Yata K."/>
            <person name="Yoshida K."/>
            <person name="Yoshikawa H.-F."/>
            <person name="Zumstein E."/>
            <person name="Yoshikawa H."/>
            <person name="Danchin A."/>
        </authorList>
    </citation>
    <scope>NUCLEOTIDE SEQUENCE [LARGE SCALE GENOMIC DNA]</scope>
    <source>
        <strain>168</strain>
    </source>
</reference>
<reference evidence="5 6 7 8" key="3">
    <citation type="journal article" date="2018" name="Nat. Chem. Biol.">
        <title>Acetate-dependent tRNA acetylation required for decoding fidelity in protein synthesis.</title>
        <authorList>
            <person name="Taniguchi T."/>
            <person name="Miyauchi K."/>
            <person name="Sakaguchi Y."/>
            <person name="Yamashita S."/>
            <person name="Soma A."/>
            <person name="Tomita K."/>
            <person name="Suzuki T."/>
        </authorList>
    </citation>
    <scope>X-RAY CRYSTALLOGRAPHY (2.10 ANGSTROMS) IN COMPLEXES WITH ATP AND ATP ANALOGS</scope>
    <scope>FUNCTION</scope>
    <scope>CATALYTIC ACTIVITY</scope>
    <scope>SUBUNIT</scope>
    <scope>DISRUPTION PHENOTYPE</scope>
    <scope>MUTAGENESIS OF GLU-9; HIS-14; HIS-17; HIS-20; ARG-44; LYS-129; LYS-133; LYS-134; ASN-162; ARG-187; ILE-188; SER-206; THR-208; ARG-211; TYR-253; TYR-256; ARG-279; LYS-298; LYS-300; ARG-301; ARG-306; ARG-309; LYS-352; LYS-353 AND LYS-362</scope>
    <source>
        <strain>168</strain>
    </source>
</reference>
<keyword id="KW-0002">3D-structure</keyword>
<keyword id="KW-0067">ATP-binding</keyword>
<keyword id="KW-0963">Cytoplasm</keyword>
<keyword id="KW-0436">Ligase</keyword>
<keyword id="KW-0547">Nucleotide-binding</keyword>
<keyword id="KW-1185">Reference proteome</keyword>
<keyword id="KW-0694">RNA-binding</keyword>
<keyword id="KW-0819">tRNA processing</keyword>
<keyword id="KW-0820">tRNA-binding</keyword>
<feature type="chain" id="PRO_0000147160" description="tRNA(Met) cytidine acetate ligase">
    <location>
        <begin position="1"/>
        <end position="415"/>
    </location>
</feature>
<feature type="binding site" evidence="1 2">
    <location>
        <begin position="7"/>
        <end position="20"/>
    </location>
    <ligand>
        <name>ATP</name>
        <dbReference type="ChEBI" id="CHEBI:30616"/>
    </ligand>
</feature>
<feature type="binding site" evidence="1 2">
    <location>
        <position position="101"/>
    </location>
    <ligand>
        <name>ATP</name>
        <dbReference type="ChEBI" id="CHEBI:30616"/>
    </ligand>
</feature>
<feature type="binding site" evidence="1 2">
    <location>
        <position position="162"/>
    </location>
    <ligand>
        <name>ATP</name>
        <dbReference type="ChEBI" id="CHEBI:30616"/>
    </ligand>
</feature>
<feature type="binding site" evidence="1 2">
    <location>
        <begin position="187"/>
        <end position="188"/>
    </location>
    <ligand>
        <name>ATP</name>
        <dbReference type="ChEBI" id="CHEBI:30616"/>
    </ligand>
</feature>
<feature type="mutagenesis site" description="Almost loss of activity." evidence="2">
    <original>E</original>
    <variation>A</variation>
    <location>
        <position position="9"/>
    </location>
</feature>
<feature type="mutagenesis site" description="Strong decrease in activity." evidence="2">
    <original>H</original>
    <variation>A</variation>
    <location>
        <position position="14"/>
    </location>
</feature>
<feature type="mutagenesis site" description="Almost loss of activity." evidence="2">
    <original>H</original>
    <variation>A</variation>
    <location>
        <position position="17"/>
    </location>
</feature>
<feature type="mutagenesis site" description="Decrease in activity." evidence="2">
    <original>H</original>
    <variation>A</variation>
    <location>
        <position position="20"/>
    </location>
</feature>
<feature type="mutagenesis site" description="Almost loss of activity." evidence="2">
    <original>R</original>
    <variation>A</variation>
    <location>
        <position position="44"/>
    </location>
</feature>
<feature type="mutagenesis site" description="Decrease in activity." evidence="2">
    <original>K</original>
    <variation>A</variation>
    <location>
        <position position="129"/>
    </location>
</feature>
<feature type="mutagenesis site" description="No change in activity." evidence="2">
    <original>K</original>
    <variation>A</variation>
    <location>
        <position position="133"/>
    </location>
</feature>
<feature type="mutagenesis site" description="No change in activity." evidence="2">
    <original>K</original>
    <variation>A</variation>
    <location>
        <position position="134"/>
    </location>
</feature>
<feature type="mutagenesis site" description="Almost loss of activity." evidence="2">
    <original>N</original>
    <variation>A</variation>
    <location>
        <position position="162"/>
    </location>
</feature>
<feature type="mutagenesis site" description="Almost loss of activity." evidence="2">
    <original>R</original>
    <variation>A</variation>
    <location>
        <position position="187"/>
    </location>
</feature>
<feature type="mutagenesis site" description="No change in activity." evidence="2">
    <original>I</original>
    <variation>A</variation>
    <location>
        <position position="188"/>
    </location>
</feature>
<feature type="mutagenesis site" description="Decrease in activity." evidence="2">
    <original>S</original>
    <variation>A</variation>
    <location>
        <position position="206"/>
    </location>
</feature>
<feature type="mutagenesis site" description="Strong decrease in activity." evidence="2">
    <original>T</original>
    <variation>A</variation>
    <location>
        <position position="208"/>
    </location>
</feature>
<feature type="mutagenesis site" description="Almost loss of activity." evidence="2">
    <original>R</original>
    <variation>A</variation>
    <location>
        <position position="211"/>
    </location>
</feature>
<feature type="mutagenesis site" description="Cannot form a dimer and has no activity; when associated with Glu-256." evidence="2">
    <original>Y</original>
    <variation>E</variation>
    <location>
        <position position="253"/>
    </location>
</feature>
<feature type="mutagenesis site" description="Cannot form a dimer and has no activity; when associated with Glu-253." evidence="2">
    <original>Y</original>
    <variation>E</variation>
    <location>
        <position position="256"/>
    </location>
</feature>
<feature type="mutagenesis site" description="Strong decrease in activity. Decreases tRNA binding." evidence="2">
    <original>R</original>
    <variation>A</variation>
    <location>
        <position position="279"/>
    </location>
</feature>
<feature type="mutagenesis site" description="Strong decrease in activity." evidence="2">
    <original>K</original>
    <variation>A</variation>
    <location>
        <position position="298"/>
    </location>
</feature>
<feature type="mutagenesis site" description="Strong decrease in activity. Decreases tRNA binding." evidence="2">
    <original>K</original>
    <variation>A</variation>
    <location>
        <position position="300"/>
    </location>
</feature>
<feature type="mutagenesis site" description="Almost loss of activity." evidence="2">
    <original>R</original>
    <variation>A</variation>
    <location>
        <position position="301"/>
    </location>
</feature>
<feature type="mutagenesis site" description="Almost loss of activity." evidence="2">
    <original>R</original>
    <variation>A</variation>
    <location>
        <position position="306"/>
    </location>
</feature>
<feature type="mutagenesis site" description="Almost loss of activity. Decreases tRNA binding." evidence="2">
    <original>R</original>
    <variation>A</variation>
    <location>
        <position position="309"/>
    </location>
</feature>
<feature type="mutagenesis site" description="Strong decrease in activity. Decreases tRNA binding." evidence="2">
    <original>K</original>
    <variation>A</variation>
    <location>
        <position position="352"/>
    </location>
</feature>
<feature type="mutagenesis site" description="No change in activity." evidence="2">
    <original>K</original>
    <variation>A</variation>
    <location>
        <position position="353"/>
    </location>
</feature>
<feature type="mutagenesis site" description="Strong decrease in activity. Decreases tRNA binding." evidence="2">
    <original>K</original>
    <variation>A</variation>
    <location>
        <position position="362"/>
    </location>
</feature>
<feature type="strand" evidence="11">
    <location>
        <begin position="3"/>
        <end position="8"/>
    </location>
</feature>
<feature type="helix" evidence="11">
    <location>
        <begin position="15"/>
        <end position="28"/>
    </location>
</feature>
<feature type="strand" evidence="11">
    <location>
        <begin position="31"/>
        <end position="38"/>
    </location>
</feature>
<feature type="helix" evidence="11">
    <location>
        <begin position="52"/>
        <end position="60"/>
    </location>
</feature>
<feature type="turn" evidence="11">
    <location>
        <begin position="61"/>
        <end position="63"/>
    </location>
</feature>
<feature type="strand" evidence="11">
    <location>
        <begin position="65"/>
        <end position="70"/>
    </location>
</feature>
<feature type="helix" evidence="11">
    <location>
        <begin position="72"/>
        <end position="75"/>
    </location>
</feature>
<feature type="helix" evidence="11">
    <location>
        <begin position="79"/>
        <end position="92"/>
    </location>
</feature>
<feature type="strand" evidence="11">
    <location>
        <begin position="96"/>
        <end position="103"/>
    </location>
</feature>
<feature type="helix" evidence="11">
    <location>
        <begin position="108"/>
        <end position="133"/>
    </location>
</feature>
<feature type="helix" evidence="11">
    <location>
        <begin position="138"/>
        <end position="150"/>
    </location>
</feature>
<feature type="strand" evidence="11">
    <location>
        <begin position="158"/>
        <end position="160"/>
    </location>
</feature>
<feature type="helix" evidence="11">
    <location>
        <begin position="161"/>
        <end position="176"/>
    </location>
</feature>
<feature type="strand" evidence="11">
    <location>
        <begin position="181"/>
        <end position="186"/>
    </location>
</feature>
<feature type="strand" evidence="10">
    <location>
        <begin position="192"/>
        <end position="195"/>
    </location>
</feature>
<feature type="helix" evidence="11">
    <location>
        <begin position="207"/>
        <end position="215"/>
    </location>
</feature>
<feature type="strand" evidence="11">
    <location>
        <begin position="220"/>
        <end position="222"/>
    </location>
</feature>
<feature type="helix" evidence="11">
    <location>
        <begin position="223"/>
        <end position="225"/>
    </location>
</feature>
<feature type="helix" evidence="11">
    <location>
        <begin position="228"/>
        <end position="241"/>
    </location>
</feature>
<feature type="helix" evidence="11">
    <location>
        <begin position="247"/>
        <end position="250"/>
    </location>
</feature>
<feature type="helix" evidence="11">
    <location>
        <begin position="251"/>
        <end position="257"/>
    </location>
</feature>
<feature type="helix" evidence="11">
    <location>
        <begin position="263"/>
        <end position="267"/>
    </location>
</feature>
<feature type="helix" evidence="11">
    <location>
        <begin position="276"/>
        <end position="286"/>
    </location>
</feature>
<feature type="helix" evidence="11">
    <location>
        <begin position="290"/>
        <end position="297"/>
    </location>
</feature>
<feature type="strand" evidence="9">
    <location>
        <begin position="300"/>
        <end position="302"/>
    </location>
</feature>
<feature type="helix" evidence="11">
    <location>
        <begin position="304"/>
        <end position="316"/>
    </location>
</feature>
<feature type="helix" evidence="11">
    <location>
        <begin position="320"/>
        <end position="328"/>
    </location>
</feature>
<feature type="strand" evidence="11">
    <location>
        <begin position="329"/>
        <end position="331"/>
    </location>
</feature>
<feature type="strand" evidence="11">
    <location>
        <begin position="335"/>
        <end position="340"/>
    </location>
</feature>
<feature type="helix" evidence="11">
    <location>
        <begin position="342"/>
        <end position="351"/>
    </location>
</feature>
<feature type="turn" evidence="11">
    <location>
        <begin position="352"/>
        <end position="354"/>
    </location>
</feature>
<feature type="strand" evidence="11">
    <location>
        <begin position="359"/>
        <end position="362"/>
    </location>
</feature>
<feature type="helix" evidence="11">
    <location>
        <begin position="363"/>
        <end position="365"/>
    </location>
</feature>
<feature type="helix" evidence="11">
    <location>
        <begin position="369"/>
        <end position="381"/>
    </location>
</feature>
<feature type="turn" evidence="11">
    <location>
        <begin position="382"/>
        <end position="384"/>
    </location>
</feature>
<feature type="helix" evidence="11">
    <location>
        <begin position="389"/>
        <end position="399"/>
    </location>
</feature>
<feature type="strand" evidence="11">
    <location>
        <begin position="403"/>
        <end position="406"/>
    </location>
</feature>
<feature type="turn" evidence="11">
    <location>
        <begin position="407"/>
        <end position="410"/>
    </location>
</feature>
<name>TMCAL_BACSU</name>
<evidence type="ECO:0000255" key="1">
    <source>
        <dbReference type="HAMAP-Rule" id="MF_01539"/>
    </source>
</evidence>
<evidence type="ECO:0000269" key="2">
    <source>
    </source>
</evidence>
<evidence type="ECO:0000303" key="3">
    <source>
    </source>
</evidence>
<evidence type="ECO:0000305" key="4"/>
<evidence type="ECO:0007744" key="5">
    <source>
        <dbReference type="PDB" id="5Y0N"/>
    </source>
</evidence>
<evidence type="ECO:0007744" key="6">
    <source>
        <dbReference type="PDB" id="5Y0O"/>
    </source>
</evidence>
<evidence type="ECO:0007744" key="7">
    <source>
        <dbReference type="PDB" id="5Y0P"/>
    </source>
</evidence>
<evidence type="ECO:0007744" key="8">
    <source>
        <dbReference type="PDB" id="5Y0Q"/>
    </source>
</evidence>
<evidence type="ECO:0007829" key="9">
    <source>
        <dbReference type="PDB" id="5Y0N"/>
    </source>
</evidence>
<evidence type="ECO:0007829" key="10">
    <source>
        <dbReference type="PDB" id="5Y0O"/>
    </source>
</evidence>
<evidence type="ECO:0007829" key="11">
    <source>
        <dbReference type="PDB" id="5Y0Q"/>
    </source>
</evidence>
<proteinExistence type="evidence at protein level"/>
<comment type="function">
    <text evidence="1 2">Catalyzes the formation of N(4)-acetylcytidine (ac(4)C) at the wobble position of elongator tRNA(Met), using acetate and ATP as substrates. First activates an acetate ion to form acetyladenylate (Ac-AMP) and then transfers the acetyl group to tRNA to form ac(4)C34.</text>
</comment>
<comment type="catalytic activity">
    <reaction evidence="1 2">
        <text>cytidine(34) in elongator tRNA(Met) + acetate + ATP = N(4)-acetylcytidine(34) in elongator tRNA(Met) + AMP + diphosphate</text>
        <dbReference type="Rhea" id="RHEA:58144"/>
        <dbReference type="Rhea" id="RHEA-COMP:10693"/>
        <dbReference type="Rhea" id="RHEA-COMP:10694"/>
        <dbReference type="ChEBI" id="CHEBI:30089"/>
        <dbReference type="ChEBI" id="CHEBI:30616"/>
        <dbReference type="ChEBI" id="CHEBI:33019"/>
        <dbReference type="ChEBI" id="CHEBI:74900"/>
        <dbReference type="ChEBI" id="CHEBI:82748"/>
        <dbReference type="ChEBI" id="CHEBI:456215"/>
    </reaction>
</comment>
<comment type="subunit">
    <text evidence="2">Homodimer.</text>
</comment>
<comment type="subcellular location">
    <subcellularLocation>
        <location evidence="1 4">Cytoplasm</location>
    </subcellularLocation>
</comment>
<comment type="disruption phenotype">
    <text evidence="2">Deletion mutant lacks the ac(4)C34 modification and displays a cold-sensitive phenotype.</text>
</comment>
<comment type="similarity">
    <text evidence="1 4">Belongs to the TmcAL family.</text>
</comment>